<proteinExistence type="predicted"/>
<protein>
    <recommendedName>
        <fullName evidence="2">Lamassu protein LmuA</fullName>
    </recommendedName>
    <alternativeName>
        <fullName evidence="4">Putative nuclease LmuA</fullName>
    </alternativeName>
</protein>
<reference evidence="5" key="1">
    <citation type="submission" date="2012-04" db="EMBL/GenBank/DDBJ databases">
        <title>The Genome Sequence of Bacillus cereus VD014.</title>
        <authorList>
            <consortium name="The Broad Institute Genome Sequencing Platform"/>
            <consortium name="The Broad Institute Genome Sequencing Center for Infectious Disease"/>
            <person name="Feldgarden M."/>
            <person name="Van der Auwera G.A."/>
            <person name="Mahillon J."/>
            <person name="Duprez V."/>
            <person name="Timmery S."/>
            <person name="Mattelet C."/>
            <person name="Dierick K."/>
            <person name="Sun M."/>
            <person name="Yu Z."/>
            <person name="Zhu L."/>
            <person name="Hu X."/>
            <person name="Shank E.B."/>
            <person name="Swiecicka I."/>
            <person name="Hansen B.M."/>
            <person name="Andrup L."/>
            <person name="Young S.K."/>
            <person name="Zeng Q."/>
            <person name="Gargeya S."/>
            <person name="Fitzgerald M."/>
            <person name="Haas B."/>
            <person name="Abouelleil A."/>
            <person name="Alvarado L."/>
            <person name="Arachchi H.M."/>
            <person name="Berlin A."/>
            <person name="Chapman S.B."/>
            <person name="Goldberg J."/>
            <person name="Griggs A."/>
            <person name="Gujja S."/>
            <person name="Hansen M."/>
            <person name="Howarth C."/>
            <person name="Imamovic A."/>
            <person name="Larimer J."/>
            <person name="McCowen C."/>
            <person name="Montmayeur A."/>
            <person name="Murphy C."/>
            <person name="Neiman D."/>
            <person name="Pearson M."/>
            <person name="Priest M."/>
            <person name="Roberts A."/>
            <person name="Saif S."/>
            <person name="Shea T."/>
            <person name="Sisk P."/>
            <person name="Sykes S."/>
            <person name="Wortman J."/>
            <person name="Nusbaum C."/>
            <person name="Birren B."/>
        </authorList>
    </citation>
    <scope>NUCLEOTIDE SEQUENCE [LARGE SCALE GENOMIC DNA]</scope>
    <source>
        <strain>VD014</strain>
    </source>
</reference>
<reference key="2">
    <citation type="journal article" date="2018" name="Science">
        <title>Systematic discovery of antiphage defense systems in the microbial pangenome.</title>
        <authorList>
            <person name="Doron S."/>
            <person name="Melamed S."/>
            <person name="Ofir G."/>
            <person name="Leavitt A."/>
            <person name="Lopatina A."/>
            <person name="Keren M."/>
            <person name="Amitai G."/>
            <person name="Sorek R."/>
        </authorList>
    </citation>
    <scope>FUNCTION</scope>
    <scope>EXPRESSION IN B.SUBTILIS</scope>
    <source>
        <strain>VD014</strain>
    </source>
</reference>
<organism>
    <name type="scientific">Bacillus cereus (strain VD014)</name>
    <dbReference type="NCBI Taxonomy" id="1053223"/>
    <lineage>
        <taxon>Bacteria</taxon>
        <taxon>Bacillati</taxon>
        <taxon>Bacillota</taxon>
        <taxon>Bacilli</taxon>
        <taxon>Bacillales</taxon>
        <taxon>Bacillaceae</taxon>
        <taxon>Bacillus</taxon>
        <taxon>Bacillus cereus group</taxon>
    </lineage>
</organism>
<feature type="chain" id="PRO_0000456375" description="Lamassu protein LmuA">
    <location>
        <begin position="1"/>
        <end position="355"/>
    </location>
</feature>
<gene>
    <name evidence="2" type="primary">lmuA</name>
    <name evidence="5" type="ORF">IIA_05627</name>
</gene>
<comment type="function">
    <text evidence="1 3">Component of antiviral defense system Lamassu type II, composed of LmuA and LmuB. Expression of Lamassu type II in B.subtilis (strain BEST7003) confers resistance to phage SpBeta (PubMed:29371424). May be a nuclease (Probable).</text>
</comment>
<accession>J8D1N4</accession>
<keyword id="KW-0051">Antiviral defense</keyword>
<keyword id="KW-0378">Hydrolase</keyword>
<keyword id="KW-0540">Nuclease</keyword>
<evidence type="ECO:0000269" key="1">
    <source>
    </source>
</evidence>
<evidence type="ECO:0000303" key="2">
    <source>
    </source>
</evidence>
<evidence type="ECO:0000305" key="3"/>
<evidence type="ECO:0000305" key="4">
    <source>
    </source>
</evidence>
<evidence type="ECO:0000312" key="5">
    <source>
        <dbReference type="EMBL" id="EJR12434.1"/>
    </source>
</evidence>
<name>LMUA_BACC8</name>
<sequence>MDISSYPSLETYEARENTGSRSSNRLAMQISFAMWKIFELYQNEDFTVAMDCIDDVVIFKTSNENPTIVTYQLKTKDATTGNFELRKLIGDNVFLKMYDHIEKIDADVEEIYLITNNPLKFRKKTVNAERILFEKLDEDIKELIEENMSQSKVFADKGLSSKFIYSLVDMSFHNHREISQYKLNSLLMKEKIDISITAADALFNALQDILTTKQNYEFSLQDEFNTVLKKKSYSKTEFTSLLDNSKKINAYVLSFEDIRTNYKSKPLKLKEESLYRRAMASVKEKCNKSPNILQNINEDIFQYAKEQIDINDEITRIELVILLQSVFDDKINVELSKEEKEILYMQNIELALREG</sequence>
<dbReference type="EMBL" id="AHER01000061">
    <property type="protein sequence ID" value="EJR12434.1"/>
    <property type="molecule type" value="Genomic_DNA"/>
</dbReference>
<dbReference type="RefSeq" id="WP_000355397.1">
    <property type="nucleotide sequence ID" value="NZ_JH792026.1"/>
</dbReference>
<dbReference type="PATRIC" id="fig|1053223.3.peg.5728"/>
<dbReference type="HOGENOM" id="CLU_779998_0_0_9"/>
<dbReference type="Proteomes" id="UP000006607">
    <property type="component" value="Unassembled WGS sequence"/>
</dbReference>
<dbReference type="GO" id="GO:0004518">
    <property type="term" value="F:nuclease activity"/>
    <property type="evidence" value="ECO:0007669"/>
    <property type="project" value="UniProtKB-KW"/>
</dbReference>
<dbReference type="GO" id="GO:0051607">
    <property type="term" value="P:defense response to virus"/>
    <property type="evidence" value="ECO:0007669"/>
    <property type="project" value="UniProtKB-KW"/>
</dbReference>